<accession>P18909</accession>
<name>ANF_AQUCT</name>
<evidence type="ECO:0000250" key="1"/>
<evidence type="ECO:0000255" key="2"/>
<evidence type="ECO:0000305" key="3"/>
<reference key="1">
    <citation type="submission" date="1992-07" db="EMBL/GenBank/DDBJ databases">
        <authorList>
            <person name="Kojima M."/>
        </authorList>
    </citation>
    <scope>NUCLEOTIDE SEQUENCE [MRNA]</scope>
</reference>
<reference key="2">
    <citation type="journal article" date="1988" name="Biochem. Biophys. Res. Commun.">
        <title>Identification of new atrial natriuretic peptides in frog heart.</title>
        <authorList>
            <person name="Sakata J."/>
            <person name="Kangawa K."/>
            <person name="Matsuo H."/>
        </authorList>
    </citation>
    <scope>PROTEIN SEQUENCE OF 122-145</scope>
    <source>
        <tissue>Heart</tissue>
    </source>
</reference>
<sequence>MGTSFVGYLTFVLLLLALTKVRGGPAYNSPLSSDLSDLKGLLERLEDRLPVEEVETPVQDIFAPNYDSADSSNSAPSLTVEAARPGADMMYNRGSWTQQEKSSPLRNKLRELLNAPRSMRRSSDCFGSRIDRIGAQSGMGCGRRF</sequence>
<keyword id="KW-0165">Cleavage on pair of basic residues</keyword>
<keyword id="KW-0903">Direct protein sequencing</keyword>
<keyword id="KW-1015">Disulfide bond</keyword>
<keyword id="KW-0372">Hormone</keyword>
<keyword id="KW-0964">Secreted</keyword>
<keyword id="KW-0732">Signal</keyword>
<keyword id="KW-0838">Vasoactive</keyword>
<dbReference type="EMBL" id="D01043">
    <property type="protein sequence ID" value="BAA00850.1"/>
    <property type="molecule type" value="mRNA"/>
</dbReference>
<dbReference type="PIR" id="JQ0947">
    <property type="entry name" value="JQ0947"/>
</dbReference>
<dbReference type="GO" id="GO:0005737">
    <property type="term" value="C:cytoplasm"/>
    <property type="evidence" value="ECO:0007669"/>
    <property type="project" value="TreeGrafter"/>
</dbReference>
<dbReference type="GO" id="GO:0005615">
    <property type="term" value="C:extracellular space"/>
    <property type="evidence" value="ECO:0007669"/>
    <property type="project" value="TreeGrafter"/>
</dbReference>
<dbReference type="GO" id="GO:0005179">
    <property type="term" value="F:hormone activity"/>
    <property type="evidence" value="ECO:0007669"/>
    <property type="project" value="UniProtKB-KW"/>
</dbReference>
<dbReference type="GO" id="GO:0051427">
    <property type="term" value="F:hormone receptor binding"/>
    <property type="evidence" value="ECO:0007669"/>
    <property type="project" value="TreeGrafter"/>
</dbReference>
<dbReference type="GO" id="GO:0097746">
    <property type="term" value="P:blood vessel diameter maintenance"/>
    <property type="evidence" value="ECO:0007669"/>
    <property type="project" value="UniProtKB-KW"/>
</dbReference>
<dbReference type="GO" id="GO:0006182">
    <property type="term" value="P:cGMP biosynthetic process"/>
    <property type="evidence" value="ECO:0000250"/>
    <property type="project" value="UniProtKB"/>
</dbReference>
<dbReference type="GO" id="GO:0019934">
    <property type="term" value="P:cGMP-mediated signaling"/>
    <property type="evidence" value="ECO:0007669"/>
    <property type="project" value="TreeGrafter"/>
</dbReference>
<dbReference type="GO" id="GO:0003085">
    <property type="term" value="P:negative regulation of systemic arterial blood pressure"/>
    <property type="evidence" value="ECO:0007669"/>
    <property type="project" value="TreeGrafter"/>
</dbReference>
<dbReference type="GO" id="GO:0007218">
    <property type="term" value="P:neuropeptide signaling pathway"/>
    <property type="evidence" value="ECO:0007669"/>
    <property type="project" value="TreeGrafter"/>
</dbReference>
<dbReference type="GO" id="GO:0007168">
    <property type="term" value="P:receptor guanylyl cyclase signaling pathway"/>
    <property type="evidence" value="ECO:0000250"/>
    <property type="project" value="UniProtKB"/>
</dbReference>
<dbReference type="InterPro" id="IPR000663">
    <property type="entry name" value="Natr_peptide"/>
</dbReference>
<dbReference type="InterPro" id="IPR030480">
    <property type="entry name" value="Natr_peptide_CS"/>
</dbReference>
<dbReference type="InterPro" id="IPR050787">
    <property type="entry name" value="Natriuretic_peptide"/>
</dbReference>
<dbReference type="InterPro" id="IPR002407">
    <property type="entry name" value="Natriuretic_peptide_atrial"/>
</dbReference>
<dbReference type="PANTHER" id="PTHR14066">
    <property type="entry name" value="ATRIAL NATRIURETIC FACTOR PRECURSOR"/>
    <property type="match status" value="1"/>
</dbReference>
<dbReference type="PANTHER" id="PTHR14066:SF2">
    <property type="entry name" value="NATRIURETIC PEPTIDES A"/>
    <property type="match status" value="1"/>
</dbReference>
<dbReference type="Pfam" id="PF00212">
    <property type="entry name" value="ANP"/>
    <property type="match status" value="1"/>
</dbReference>
<dbReference type="PRINTS" id="PR00711">
    <property type="entry name" value="ANATPEPTIDE"/>
</dbReference>
<dbReference type="PRINTS" id="PR00710">
    <property type="entry name" value="NATPEPTIDES"/>
</dbReference>
<dbReference type="SMART" id="SM00183">
    <property type="entry name" value="NAT_PEP"/>
    <property type="match status" value="1"/>
</dbReference>
<dbReference type="PROSITE" id="PS00263">
    <property type="entry name" value="NATRIURETIC_PEPTIDE"/>
    <property type="match status" value="1"/>
</dbReference>
<protein>
    <recommendedName>
        <fullName>Natriuretic peptides A</fullName>
    </recommendedName>
    <component>
        <recommendedName>
            <fullName>Atrial natriuretic factor</fullName>
            <shortName>ANF</shortName>
        </recommendedName>
        <alternativeName>
            <fullName>Atrial natriuretic peptide</fullName>
            <shortName>ANP</shortName>
        </alternativeName>
    </component>
    <component>
        <recommendedName>
            <fullName>ANP-24</fullName>
        </recommendedName>
    </component>
</protein>
<organism>
    <name type="scientific">Aquarana catesbeiana</name>
    <name type="common">American bullfrog</name>
    <name type="synonym">Rana catesbeiana</name>
    <dbReference type="NCBI Taxonomy" id="8400"/>
    <lineage>
        <taxon>Eukaryota</taxon>
        <taxon>Metazoa</taxon>
        <taxon>Chordata</taxon>
        <taxon>Craniata</taxon>
        <taxon>Vertebrata</taxon>
        <taxon>Euteleostomi</taxon>
        <taxon>Amphibia</taxon>
        <taxon>Batrachia</taxon>
        <taxon>Anura</taxon>
        <taxon>Neobatrachia</taxon>
        <taxon>Ranoidea</taxon>
        <taxon>Ranidae</taxon>
        <taxon>Aquarana</taxon>
    </lineage>
</organism>
<comment type="function">
    <text evidence="1">Hormone playing a key role in cardiovascular homeostasis through regulation of natriuresis, diuresis, and vasodilation. Has a cGMP-stimulating activity (By similarity).</text>
</comment>
<comment type="subcellular location">
    <subcellularLocation>
        <location>Secreted</location>
    </subcellularLocation>
</comment>
<comment type="PTM">
    <text evidence="1">Cleaved upon secretion to produce the functional hormone.</text>
</comment>
<comment type="similarity">
    <text evidence="3">Belongs to the natriuretic peptide family.</text>
</comment>
<proteinExistence type="evidence at protein level"/>
<feature type="signal peptide" evidence="2">
    <location>
        <begin position="1"/>
        <end position="23"/>
    </location>
</feature>
<feature type="propeptide" id="PRO_0000001515" evidence="1">
    <location>
        <begin position="24"/>
        <end position="117"/>
    </location>
</feature>
<feature type="peptide" id="PRO_0000391788" description="Atrial natriuretic factor" evidence="1">
    <location>
        <begin position="118"/>
        <end position="145"/>
    </location>
</feature>
<feature type="peptide" id="PRO_0000001516" description="ANP-24">
    <location>
        <begin position="122"/>
        <end position="145"/>
    </location>
</feature>
<feature type="site" description="Cleavage" evidence="1">
    <location>
        <begin position="117"/>
        <end position="118"/>
    </location>
</feature>
<feature type="disulfide bond">
    <location>
        <begin position="125"/>
        <end position="141"/>
    </location>
</feature>